<feature type="initiator methionine" description="Removed" evidence="6">
    <location>
        <position position="1"/>
    </location>
</feature>
<feature type="chain" id="PRO_0000204765" description="Protein MOTHER of FT and TFL1">
    <location>
        <begin position="2"/>
        <end position="173"/>
    </location>
</feature>
<feature type="modified residue" description="N-acetylalanine" evidence="6">
    <location>
        <position position="2"/>
    </location>
</feature>
<organism>
    <name type="scientific">Arabidopsis thaliana</name>
    <name type="common">Mouse-ear cress</name>
    <dbReference type="NCBI Taxonomy" id="3702"/>
    <lineage>
        <taxon>Eukaryota</taxon>
        <taxon>Viridiplantae</taxon>
        <taxon>Streptophyta</taxon>
        <taxon>Embryophyta</taxon>
        <taxon>Tracheophyta</taxon>
        <taxon>Spermatophyta</taxon>
        <taxon>Magnoliopsida</taxon>
        <taxon>eudicotyledons</taxon>
        <taxon>Gunneridae</taxon>
        <taxon>Pentapetalae</taxon>
        <taxon>rosids</taxon>
        <taxon>malvids</taxon>
        <taxon>Brassicales</taxon>
        <taxon>Brassicaceae</taxon>
        <taxon>Camelineae</taxon>
        <taxon>Arabidopsis</taxon>
    </lineage>
</organism>
<protein>
    <recommendedName>
        <fullName>Protein MOTHER of FT and TFL1</fullName>
    </recommendedName>
</protein>
<dbReference type="EMBL" id="AF147721">
    <property type="protein sequence ID" value="AAD37380.1"/>
    <property type="molecule type" value="mRNA"/>
</dbReference>
<dbReference type="EMBL" id="AC034107">
    <property type="protein sequence ID" value="AAF97827.1"/>
    <property type="molecule type" value="Genomic_DNA"/>
</dbReference>
<dbReference type="EMBL" id="AC069551">
    <property type="protein sequence ID" value="AAF78390.1"/>
    <property type="molecule type" value="Genomic_DNA"/>
</dbReference>
<dbReference type="EMBL" id="CP002684">
    <property type="protein sequence ID" value="AEE29676.1"/>
    <property type="molecule type" value="Genomic_DNA"/>
</dbReference>
<dbReference type="EMBL" id="AF332406">
    <property type="protein sequence ID" value="AAG48769.1"/>
    <property type="molecule type" value="mRNA"/>
</dbReference>
<dbReference type="RefSeq" id="NP_173250.1">
    <property type="nucleotide sequence ID" value="NM_101672.4"/>
</dbReference>
<dbReference type="SMR" id="Q9XFK7"/>
<dbReference type="FunCoup" id="Q9XFK7">
    <property type="interactions" value="969"/>
</dbReference>
<dbReference type="STRING" id="3702.Q9XFK7"/>
<dbReference type="iPTMnet" id="Q9XFK7"/>
<dbReference type="PaxDb" id="3702-AT1G18100.1"/>
<dbReference type="ProteomicsDB" id="238357"/>
<dbReference type="EnsemblPlants" id="AT1G18100.1">
    <property type="protein sequence ID" value="AT1G18100.1"/>
    <property type="gene ID" value="AT1G18100"/>
</dbReference>
<dbReference type="GeneID" id="838390"/>
<dbReference type="Gramene" id="AT1G18100.1">
    <property type="protein sequence ID" value="AT1G18100.1"/>
    <property type="gene ID" value="AT1G18100"/>
</dbReference>
<dbReference type="KEGG" id="ath:AT1G18100"/>
<dbReference type="Araport" id="AT1G18100"/>
<dbReference type="TAIR" id="AT1G18100">
    <property type="gene designation" value="E12A11"/>
</dbReference>
<dbReference type="eggNOG" id="KOG3346">
    <property type="taxonomic scope" value="Eukaryota"/>
</dbReference>
<dbReference type="HOGENOM" id="CLU_043994_6_1_1"/>
<dbReference type="InParanoid" id="Q9XFK7"/>
<dbReference type="OMA" id="YKQRDYT"/>
<dbReference type="OrthoDB" id="2506647at2759"/>
<dbReference type="PhylomeDB" id="Q9XFK7"/>
<dbReference type="PRO" id="PR:Q9XFK7"/>
<dbReference type="Proteomes" id="UP000006548">
    <property type="component" value="Chromosome 1"/>
</dbReference>
<dbReference type="ExpressionAtlas" id="Q9XFK7">
    <property type="expression patterns" value="baseline and differential"/>
</dbReference>
<dbReference type="GO" id="GO:0005737">
    <property type="term" value="C:cytoplasm"/>
    <property type="evidence" value="ECO:0007669"/>
    <property type="project" value="UniProtKB-SubCell"/>
</dbReference>
<dbReference type="GO" id="GO:0005634">
    <property type="term" value="C:nucleus"/>
    <property type="evidence" value="ECO:0000314"/>
    <property type="project" value="TAIR"/>
</dbReference>
<dbReference type="GO" id="GO:0009738">
    <property type="term" value="P:abscisic acid-activated signaling pathway"/>
    <property type="evidence" value="ECO:0007669"/>
    <property type="project" value="UniProtKB-KW"/>
</dbReference>
<dbReference type="GO" id="GO:0010030">
    <property type="term" value="P:positive regulation of seed germination"/>
    <property type="evidence" value="ECO:0000315"/>
    <property type="project" value="TAIR"/>
</dbReference>
<dbReference type="GO" id="GO:0009737">
    <property type="term" value="P:response to abscisic acid"/>
    <property type="evidence" value="ECO:0000315"/>
    <property type="project" value="TAIR"/>
</dbReference>
<dbReference type="CDD" id="cd00866">
    <property type="entry name" value="PEBP_euk"/>
    <property type="match status" value="1"/>
</dbReference>
<dbReference type="FunFam" id="3.90.280.10:FF:000001">
    <property type="entry name" value="Terminal flower 1"/>
    <property type="match status" value="1"/>
</dbReference>
<dbReference type="Gene3D" id="3.90.280.10">
    <property type="entry name" value="PEBP-like"/>
    <property type="match status" value="1"/>
</dbReference>
<dbReference type="InterPro" id="IPR008914">
    <property type="entry name" value="PEBP"/>
</dbReference>
<dbReference type="InterPro" id="IPR036610">
    <property type="entry name" value="PEBP-like_sf"/>
</dbReference>
<dbReference type="InterPro" id="IPR035810">
    <property type="entry name" value="PEBP_euk"/>
</dbReference>
<dbReference type="InterPro" id="IPR001858">
    <property type="entry name" value="Phosphatidylethanolamine-bd_CS"/>
</dbReference>
<dbReference type="PANTHER" id="PTHR11362">
    <property type="entry name" value="PHOSPHATIDYLETHANOLAMINE-BINDING PROTEIN"/>
    <property type="match status" value="1"/>
</dbReference>
<dbReference type="PANTHER" id="PTHR11362:SF82">
    <property type="entry name" value="PHOSPHATIDYLETHANOLAMINE-BINDING PROTEIN 4"/>
    <property type="match status" value="1"/>
</dbReference>
<dbReference type="Pfam" id="PF01161">
    <property type="entry name" value="PBP"/>
    <property type="match status" value="1"/>
</dbReference>
<dbReference type="SUPFAM" id="SSF49777">
    <property type="entry name" value="PEBP-like"/>
    <property type="match status" value="1"/>
</dbReference>
<dbReference type="PROSITE" id="PS01220">
    <property type="entry name" value="PBP"/>
    <property type="match status" value="1"/>
</dbReference>
<reference key="1">
    <citation type="submission" date="1999-04" db="EMBL/GenBank/DDBJ databases">
        <title>A new Arabidopsis member of the TFL1/FT gene family.</title>
        <authorList>
            <person name="Kardailsky I."/>
            <person name="Weigel D."/>
        </authorList>
    </citation>
    <scope>NUCLEOTIDE SEQUENCE [MRNA]</scope>
    <source>
        <strain>cv. Columbia</strain>
    </source>
</reference>
<reference key="2">
    <citation type="journal article" date="2000" name="Nature">
        <title>Sequence and analysis of chromosome 1 of the plant Arabidopsis thaliana.</title>
        <authorList>
            <person name="Theologis A."/>
            <person name="Ecker J.R."/>
            <person name="Palm C.J."/>
            <person name="Federspiel N.A."/>
            <person name="Kaul S."/>
            <person name="White O."/>
            <person name="Alonso J."/>
            <person name="Altafi H."/>
            <person name="Araujo R."/>
            <person name="Bowman C.L."/>
            <person name="Brooks S.Y."/>
            <person name="Buehler E."/>
            <person name="Chan A."/>
            <person name="Chao Q."/>
            <person name="Chen H."/>
            <person name="Cheuk R.F."/>
            <person name="Chin C.W."/>
            <person name="Chung M.K."/>
            <person name="Conn L."/>
            <person name="Conway A.B."/>
            <person name="Conway A.R."/>
            <person name="Creasy T.H."/>
            <person name="Dewar K."/>
            <person name="Dunn P."/>
            <person name="Etgu P."/>
            <person name="Feldblyum T.V."/>
            <person name="Feng J.-D."/>
            <person name="Fong B."/>
            <person name="Fujii C.Y."/>
            <person name="Gill J.E."/>
            <person name="Goldsmith A.D."/>
            <person name="Haas B."/>
            <person name="Hansen N.F."/>
            <person name="Hughes B."/>
            <person name="Huizar L."/>
            <person name="Hunter J.L."/>
            <person name="Jenkins J."/>
            <person name="Johnson-Hopson C."/>
            <person name="Khan S."/>
            <person name="Khaykin E."/>
            <person name="Kim C.J."/>
            <person name="Koo H.L."/>
            <person name="Kremenetskaia I."/>
            <person name="Kurtz D.B."/>
            <person name="Kwan A."/>
            <person name="Lam B."/>
            <person name="Langin-Hooper S."/>
            <person name="Lee A."/>
            <person name="Lee J.M."/>
            <person name="Lenz C.A."/>
            <person name="Li J.H."/>
            <person name="Li Y.-P."/>
            <person name="Lin X."/>
            <person name="Liu S.X."/>
            <person name="Liu Z.A."/>
            <person name="Luros J.S."/>
            <person name="Maiti R."/>
            <person name="Marziali A."/>
            <person name="Militscher J."/>
            <person name="Miranda M."/>
            <person name="Nguyen M."/>
            <person name="Nierman W.C."/>
            <person name="Osborne B.I."/>
            <person name="Pai G."/>
            <person name="Peterson J."/>
            <person name="Pham P.K."/>
            <person name="Rizzo M."/>
            <person name="Rooney T."/>
            <person name="Rowley D."/>
            <person name="Sakano H."/>
            <person name="Salzberg S.L."/>
            <person name="Schwartz J.R."/>
            <person name="Shinn P."/>
            <person name="Southwick A.M."/>
            <person name="Sun H."/>
            <person name="Tallon L.J."/>
            <person name="Tambunga G."/>
            <person name="Toriumi M.J."/>
            <person name="Town C.D."/>
            <person name="Utterback T."/>
            <person name="Van Aken S."/>
            <person name="Vaysberg M."/>
            <person name="Vysotskaia V.S."/>
            <person name="Walker M."/>
            <person name="Wu D."/>
            <person name="Yu G."/>
            <person name="Fraser C.M."/>
            <person name="Venter J.C."/>
            <person name="Davis R.W."/>
        </authorList>
    </citation>
    <scope>NUCLEOTIDE SEQUENCE [LARGE SCALE GENOMIC DNA]</scope>
    <source>
        <strain>cv. Columbia</strain>
    </source>
</reference>
<reference key="3">
    <citation type="journal article" date="2017" name="Plant J.">
        <title>Araport11: a complete reannotation of the Arabidopsis thaliana reference genome.</title>
        <authorList>
            <person name="Cheng C.Y."/>
            <person name="Krishnakumar V."/>
            <person name="Chan A.P."/>
            <person name="Thibaud-Nissen F."/>
            <person name="Schobel S."/>
            <person name="Town C.D."/>
        </authorList>
    </citation>
    <scope>GENOME REANNOTATION</scope>
    <source>
        <strain>cv. Columbia</strain>
    </source>
</reference>
<reference key="4">
    <citation type="journal article" date="2003" name="Science">
        <title>Empirical analysis of transcriptional activity in the Arabidopsis genome.</title>
        <authorList>
            <person name="Yamada K."/>
            <person name="Lim J."/>
            <person name="Dale J.M."/>
            <person name="Chen H."/>
            <person name="Shinn P."/>
            <person name="Palm C.J."/>
            <person name="Southwick A.M."/>
            <person name="Wu H.C."/>
            <person name="Kim C.J."/>
            <person name="Nguyen M."/>
            <person name="Pham P.K."/>
            <person name="Cheuk R.F."/>
            <person name="Karlin-Newmann G."/>
            <person name="Liu S.X."/>
            <person name="Lam B."/>
            <person name="Sakano H."/>
            <person name="Wu T."/>
            <person name="Yu G."/>
            <person name="Miranda M."/>
            <person name="Quach H.L."/>
            <person name="Tripp M."/>
            <person name="Chang C.H."/>
            <person name="Lee J.M."/>
            <person name="Toriumi M.J."/>
            <person name="Chan M.M."/>
            <person name="Tang C.C."/>
            <person name="Onodera C.S."/>
            <person name="Deng J.M."/>
            <person name="Akiyama K."/>
            <person name="Ansari Y."/>
            <person name="Arakawa T."/>
            <person name="Banh J."/>
            <person name="Banno F."/>
            <person name="Bowser L."/>
            <person name="Brooks S.Y."/>
            <person name="Carninci P."/>
            <person name="Chao Q."/>
            <person name="Choy N."/>
            <person name="Enju A."/>
            <person name="Goldsmith A.D."/>
            <person name="Gurjal M."/>
            <person name="Hansen N.F."/>
            <person name="Hayashizaki Y."/>
            <person name="Johnson-Hopson C."/>
            <person name="Hsuan V.W."/>
            <person name="Iida K."/>
            <person name="Karnes M."/>
            <person name="Khan S."/>
            <person name="Koesema E."/>
            <person name="Ishida J."/>
            <person name="Jiang P.X."/>
            <person name="Jones T."/>
            <person name="Kawai J."/>
            <person name="Kamiya A."/>
            <person name="Meyers C."/>
            <person name="Nakajima M."/>
            <person name="Narusaka M."/>
            <person name="Seki M."/>
            <person name="Sakurai T."/>
            <person name="Satou M."/>
            <person name="Tamse R."/>
            <person name="Vaysberg M."/>
            <person name="Wallender E.K."/>
            <person name="Wong C."/>
            <person name="Yamamura Y."/>
            <person name="Yuan S."/>
            <person name="Shinozaki K."/>
            <person name="Davis R.W."/>
            <person name="Theologis A."/>
            <person name="Ecker J.R."/>
        </authorList>
    </citation>
    <scope>NUCLEOTIDE SEQUENCE [LARGE SCALE MRNA]</scope>
    <source>
        <strain>cv. Columbia</strain>
    </source>
</reference>
<reference key="5">
    <citation type="journal article" date="1999" name="Science">
        <title>A pair of related genes with antagonistic roles in mediating flowering signals.</title>
        <authorList>
            <person name="Kobayashi Y."/>
            <person name="Kaya H."/>
            <person name="Goto K."/>
            <person name="Iwabuchi M."/>
            <person name="Araki T."/>
        </authorList>
    </citation>
    <scope>IDENTIFICATION</scope>
    <source>
        <strain>cv. Columbia</strain>
    </source>
</reference>
<reference key="6">
    <citation type="journal article" date="2010" name="Plant Cell">
        <title>MOTHER OF FT AND TFL1 regulates seed germination through a negative feedback loop modulating ABA signaling in Arabidopsis.</title>
        <authorList>
            <person name="Xi W."/>
            <person name="Liu C."/>
            <person name="Hou X."/>
            <person name="Yu H."/>
        </authorList>
    </citation>
    <scope>FUNCTION</scope>
    <scope>INDUCTION BY ABSCISIC ACID</scope>
    <scope>DISRUPTION PHENOTYPE</scope>
</reference>
<reference key="7">
    <citation type="journal article" date="2010" name="Plant Signal. Behav.">
        <title>MOTHER OF FT AND TFL1 regulates seed germination and fertility relevant to the brassinosteroid signaling pathway.</title>
        <authorList>
            <person name="Xi W."/>
            <person name="Yu H."/>
        </authorList>
    </citation>
    <scope>FUNCTION</scope>
    <scope>TISSUE SPECIFICITY</scope>
</reference>
<reference key="8">
    <citation type="journal article" date="2012" name="Mol. Cell. Proteomics">
        <title>Comparative large-scale characterisation of plant vs. mammal proteins reveals similar and idiosyncratic N-alpha acetylation features.</title>
        <authorList>
            <person name="Bienvenut W.V."/>
            <person name="Sumpton D."/>
            <person name="Martinez A."/>
            <person name="Lilla S."/>
            <person name="Espagne C."/>
            <person name="Meinnel T."/>
            <person name="Giglione C."/>
        </authorList>
    </citation>
    <scope>ACETYLATION [LARGE SCALE ANALYSIS] AT ALA-2</scope>
    <scope>CLEAVAGE OF INITIATOR METHIONINE [LARGE SCALE ANALYSIS]</scope>
    <scope>IDENTIFICATION BY MASS SPECTROMETRY [LARGE SCALE ANALYSIS]</scope>
</reference>
<comment type="function">
    <text evidence="2 3 4">May form complexes with phosphorylated ligands by interfering with kinases and their effectors (By similarity). Regulates seed germination via the abscisic acid (ABA) and gibberellic acid (GA)signaling pathways. During seed germination, MFT expression is directly repressed by ABI3 or promoted by ABI5 in the ABA signaling pathway. Involved in a negative feedback regulation of ABA signaling. Promotes embryo growth by direct repression of ABI5. In the GA signaling pathway, MFT expression is promoted by the DELLA protein RGL2 during seed germination (PubMed:20551347). May regulate seed germination and fertility through the brassinosteroid (BR) signaling pathway (PubMed:20935478).</text>
</comment>
<comment type="subcellular location">
    <subcellularLocation>
        <location evidence="1">Cytoplasm</location>
    </subcellularLocation>
</comment>
<comment type="tissue specificity">
    <text evidence="4">Expressed in gametophytes and developing seeds.</text>
</comment>
<comment type="induction">
    <text evidence="3">By abscisic acid.</text>
</comment>
<comment type="disruption phenotype">
    <text evidence="3">No visible phenotype under normal growth conditions, but mutant seeds show hypersensitivity to ABA during seed germination.</text>
</comment>
<comment type="similarity">
    <text evidence="5">Belongs to the phosphatidylethanolamine-binding protein family.</text>
</comment>
<sequence>MAASVDPLVVGRVIGDVLDMFIPTANMSVYFGPKHITNGCEIKPSTAVNPPKVNISGHSDELYTLVMTDPDAPSPSEPNMREWVHWIVVDIPGGTNPSRGKEILPYMEPRPPVGIHRYILVLFRQNSPVGLMVQQPPSRANFSTRMFAGHFDLGLPVATVYFNAQKEPASRRR</sequence>
<gene>
    <name type="primary">MFT</name>
    <name type="ordered locus">At1g18100</name>
    <name type="ORF">E12A11</name>
    <name type="ORF">T10F20.11</name>
    <name type="ORF">T10F20.7</name>
</gene>
<name>MFT_ARATH</name>
<evidence type="ECO:0000250" key="1"/>
<evidence type="ECO:0000250" key="2">
    <source>
        <dbReference type="UniProtKB" id="P30086"/>
    </source>
</evidence>
<evidence type="ECO:0000269" key="3">
    <source>
    </source>
</evidence>
<evidence type="ECO:0000269" key="4">
    <source>
    </source>
</evidence>
<evidence type="ECO:0000305" key="5"/>
<evidence type="ECO:0007744" key="6">
    <source>
    </source>
</evidence>
<proteinExistence type="evidence at protein level"/>
<accession>Q9XFK7</accession>
<keyword id="KW-0938">Abscisic acid signaling pathway</keyword>
<keyword id="KW-0007">Acetylation</keyword>
<keyword id="KW-0963">Cytoplasm</keyword>
<keyword id="KW-1185">Reference proteome</keyword>